<dbReference type="EC" id="2.3.1.225" evidence="7"/>
<dbReference type="EMBL" id="AC128687">
    <property type="status" value="NOT_ANNOTATED_CDS"/>
    <property type="molecule type" value="Genomic_DNA"/>
</dbReference>
<dbReference type="EMBL" id="CH471052">
    <property type="protein sequence ID" value="EAW79617.1"/>
    <property type="molecule type" value="Genomic_DNA"/>
</dbReference>
<dbReference type="EMBL" id="CH471052">
    <property type="protein sequence ID" value="EAW79618.1"/>
    <property type="molecule type" value="Genomic_DNA"/>
</dbReference>
<dbReference type="EMBL" id="BC035230">
    <property type="protein sequence ID" value="AAH35230.2"/>
    <property type="molecule type" value="mRNA"/>
</dbReference>
<dbReference type="CCDS" id="CCDS33827.1"/>
<dbReference type="RefSeq" id="NP_775841.2">
    <property type="nucleotide sequence ID" value="NM_173570.5"/>
</dbReference>
<dbReference type="RefSeq" id="XP_005247326.1">
    <property type="nucleotide sequence ID" value="XM_005247269.2"/>
</dbReference>
<dbReference type="RefSeq" id="XP_047303847.1">
    <property type="nucleotide sequence ID" value="XM_047447891.1"/>
</dbReference>
<dbReference type="RefSeq" id="XP_047303848.1">
    <property type="nucleotide sequence ID" value="XM_047447892.1"/>
</dbReference>
<dbReference type="RefSeq" id="XP_054201970.1">
    <property type="nucleotide sequence ID" value="XM_054345995.1"/>
</dbReference>
<dbReference type="RefSeq" id="XP_054201975.1">
    <property type="nucleotide sequence ID" value="XM_054346000.1"/>
</dbReference>
<dbReference type="RefSeq" id="XP_054201976.1">
    <property type="nucleotide sequence ID" value="XM_054346001.1"/>
</dbReference>
<dbReference type="BioGRID" id="129056">
    <property type="interactions" value="79"/>
</dbReference>
<dbReference type="FunCoup" id="Q8IYP9">
    <property type="interactions" value="184"/>
</dbReference>
<dbReference type="IntAct" id="Q8IYP9">
    <property type="interactions" value="38"/>
</dbReference>
<dbReference type="STRING" id="9606.ENSP00000498556"/>
<dbReference type="iPTMnet" id="Q8IYP9"/>
<dbReference type="PhosphoSitePlus" id="Q8IYP9"/>
<dbReference type="SwissPalm" id="Q8IYP9"/>
<dbReference type="BioMuta" id="ZDHHC23"/>
<dbReference type="DMDM" id="215274191"/>
<dbReference type="jPOST" id="Q8IYP9"/>
<dbReference type="MassIVE" id="Q8IYP9"/>
<dbReference type="PaxDb" id="9606-ENSP00000330485"/>
<dbReference type="PeptideAtlas" id="Q8IYP9"/>
<dbReference type="ProteomicsDB" id="71212"/>
<dbReference type="Antibodypedia" id="16460">
    <property type="antibodies" value="52 antibodies from 14 providers"/>
</dbReference>
<dbReference type="DNASU" id="254887"/>
<dbReference type="Ensembl" id="ENST00000330212.7">
    <property type="protein sequence ID" value="ENSP00000330485.3"/>
    <property type="gene ID" value="ENSG00000184307.17"/>
</dbReference>
<dbReference type="GeneID" id="254887"/>
<dbReference type="KEGG" id="hsa:254887"/>
<dbReference type="UCSC" id="uc003eau.4">
    <property type="organism name" value="human"/>
</dbReference>
<dbReference type="AGR" id="HGNC:28654"/>
<dbReference type="CTD" id="254887"/>
<dbReference type="DisGeNET" id="254887"/>
<dbReference type="GeneCards" id="ZDHHC23"/>
<dbReference type="HGNC" id="HGNC:28654">
    <property type="gene designation" value="ZDHHC23"/>
</dbReference>
<dbReference type="HPA" id="ENSG00000184307">
    <property type="expression patterns" value="Low tissue specificity"/>
</dbReference>
<dbReference type="MIM" id="617334">
    <property type="type" value="gene"/>
</dbReference>
<dbReference type="neXtProt" id="NX_Q8IYP9"/>
<dbReference type="OpenTargets" id="ENSG00000184307"/>
<dbReference type="PharmGKB" id="PA134960347"/>
<dbReference type="VEuPathDB" id="HostDB:ENSG00000184307"/>
<dbReference type="eggNOG" id="KOG1311">
    <property type="taxonomic scope" value="Eukaryota"/>
</dbReference>
<dbReference type="GeneTree" id="ENSGT00940000156558"/>
<dbReference type="InParanoid" id="Q8IYP9"/>
<dbReference type="OMA" id="GNWSEFM"/>
<dbReference type="OrthoDB" id="430659at2759"/>
<dbReference type="PAN-GO" id="Q8IYP9">
    <property type="GO annotations" value="5 GO annotations based on evolutionary models"/>
</dbReference>
<dbReference type="PhylomeDB" id="Q8IYP9"/>
<dbReference type="TreeFam" id="TF354316"/>
<dbReference type="PathwayCommons" id="Q8IYP9"/>
<dbReference type="SignaLink" id="Q8IYP9"/>
<dbReference type="BioGRID-ORCS" id="254887">
    <property type="hits" value="11 hits in 1148 CRISPR screens"/>
</dbReference>
<dbReference type="GenomeRNAi" id="254887"/>
<dbReference type="Pharos" id="Q8IYP9">
    <property type="development level" value="Tbio"/>
</dbReference>
<dbReference type="PRO" id="PR:Q8IYP9"/>
<dbReference type="Proteomes" id="UP000005640">
    <property type="component" value="Chromosome 3"/>
</dbReference>
<dbReference type="RNAct" id="Q8IYP9">
    <property type="molecule type" value="protein"/>
</dbReference>
<dbReference type="Bgee" id="ENSG00000184307">
    <property type="expression patterns" value="Expressed in sperm and 133 other cell types or tissues"/>
</dbReference>
<dbReference type="ExpressionAtlas" id="Q8IYP9">
    <property type="expression patterns" value="baseline and differential"/>
</dbReference>
<dbReference type="GO" id="GO:0005783">
    <property type="term" value="C:endoplasmic reticulum"/>
    <property type="evidence" value="ECO:0000318"/>
    <property type="project" value="GO_Central"/>
</dbReference>
<dbReference type="GO" id="GO:0005794">
    <property type="term" value="C:Golgi apparatus"/>
    <property type="evidence" value="ECO:0000318"/>
    <property type="project" value="GO_Central"/>
</dbReference>
<dbReference type="GO" id="GO:0000139">
    <property type="term" value="C:Golgi membrane"/>
    <property type="evidence" value="ECO:0007669"/>
    <property type="project" value="UniProtKB-SubCell"/>
</dbReference>
<dbReference type="GO" id="GO:0019706">
    <property type="term" value="F:protein-cysteine S-palmitoyltransferase activity"/>
    <property type="evidence" value="ECO:0000318"/>
    <property type="project" value="GO_Central"/>
</dbReference>
<dbReference type="GO" id="GO:0072659">
    <property type="term" value="P:protein localization to plasma membrane"/>
    <property type="evidence" value="ECO:0000315"/>
    <property type="project" value="UniProtKB"/>
</dbReference>
<dbReference type="GO" id="GO:0018345">
    <property type="term" value="P:protein palmitoylation"/>
    <property type="evidence" value="ECO:0000315"/>
    <property type="project" value="UniProtKB"/>
</dbReference>
<dbReference type="GO" id="GO:0006612">
    <property type="term" value="P:protein targeting to membrane"/>
    <property type="evidence" value="ECO:0000318"/>
    <property type="project" value="GO_Central"/>
</dbReference>
<dbReference type="InterPro" id="IPR001594">
    <property type="entry name" value="Palmitoyltrfase_DHHC"/>
</dbReference>
<dbReference type="InterPro" id="IPR039859">
    <property type="entry name" value="PFA4/ZDH16/20/ERF2-like"/>
</dbReference>
<dbReference type="PANTHER" id="PTHR22883:SF475">
    <property type="entry name" value="PALMITOYLTRANSFERASE ZDHHC23"/>
    <property type="match status" value="1"/>
</dbReference>
<dbReference type="PANTHER" id="PTHR22883">
    <property type="entry name" value="ZINC FINGER DHHC DOMAIN CONTAINING PROTEIN"/>
    <property type="match status" value="1"/>
</dbReference>
<dbReference type="Pfam" id="PF01529">
    <property type="entry name" value="DHHC"/>
    <property type="match status" value="1"/>
</dbReference>
<dbReference type="PROSITE" id="PS50216">
    <property type="entry name" value="DHHC"/>
    <property type="match status" value="1"/>
</dbReference>
<sequence>MTQKGSMKPVKKKKTEEPELEPLCCCEYIDRNGEKNHVATCLCDCQDLDEGCDRWITCKSLQPETCERIMDTISDRLRIPWLRGAKKVNISIIPPLVLLPVFLHVASWHFLLGVVVLTSLPVLALWYYYLTHRRKEQTLFFLSLGLFSLGYMYYVFLQEVVPKGRVGPVQLAVLTCGLFLILLALHRAKKNPGYLSNPASGDRSLSSSQLECLSRKGQEKTKGFPGADMSGSLNNRTTKDDPKGSSKMPAGSPTKAKEDWCAKCQLVRPARAWHCRICGICVRRMDHHCVWINSCVGESNHQAFILALLIFLLTSVYGITLTLDTICRDRSVFTALFYCPGVYANYSSALSFTCVWYSVIITAGMAYIFLIQLINISYNVTEREVQQALRQKTGRRLLCGLIVDTGLLG</sequence>
<feature type="chain" id="PRO_0000212912" description="Palmitoyltransferase ZDHHC23">
    <location>
        <begin position="1"/>
        <end position="409"/>
    </location>
</feature>
<feature type="topological domain" description="Cytoplasmic" evidence="9">
    <location>
        <begin position="1"/>
        <end position="87"/>
    </location>
</feature>
<feature type="transmembrane region" description="Helical" evidence="3">
    <location>
        <begin position="88"/>
        <end position="106"/>
    </location>
</feature>
<feature type="topological domain" description="Lumenal" evidence="9">
    <location>
        <begin position="107"/>
        <end position="109"/>
    </location>
</feature>
<feature type="transmembrane region" description="Helical" evidence="3">
    <location>
        <begin position="110"/>
        <end position="132"/>
    </location>
</feature>
<feature type="topological domain" description="Cytoplasmic" evidence="9">
    <location>
        <begin position="133"/>
        <end position="136"/>
    </location>
</feature>
<feature type="transmembrane region" description="Helical" evidence="3">
    <location>
        <begin position="137"/>
        <end position="157"/>
    </location>
</feature>
<feature type="topological domain" description="Lumenal" evidence="9">
    <location>
        <begin position="158"/>
        <end position="165"/>
    </location>
</feature>
<feature type="transmembrane region" description="Helical" evidence="3">
    <location>
        <begin position="166"/>
        <end position="186"/>
    </location>
</feature>
<feature type="topological domain" description="Cytoplasmic" evidence="9">
    <location>
        <begin position="187"/>
        <end position="302"/>
    </location>
</feature>
<feature type="transmembrane region" description="Helical" evidence="3">
    <location>
        <begin position="303"/>
        <end position="323"/>
    </location>
</feature>
<feature type="topological domain" description="Lumenal" evidence="9">
    <location>
        <begin position="324"/>
        <end position="331"/>
    </location>
</feature>
<feature type="transmembrane region" description="Helical" evidence="3">
    <location>
        <begin position="332"/>
        <end position="352"/>
    </location>
</feature>
<feature type="topological domain" description="Cytoplasmic" evidence="9">
    <location>
        <position position="353"/>
    </location>
</feature>
<feature type="transmembrane region" description="Helical" evidence="3">
    <location>
        <begin position="354"/>
        <end position="374"/>
    </location>
</feature>
<feature type="topological domain" description="Lumenal" evidence="9">
    <location>
        <begin position="375"/>
        <end position="409"/>
    </location>
</feature>
<feature type="domain" description="DHHC" evidence="4">
    <location>
        <begin position="259"/>
        <end position="309"/>
    </location>
</feature>
<feature type="region of interest" description="Disordered" evidence="5">
    <location>
        <begin position="215"/>
        <end position="255"/>
    </location>
</feature>
<feature type="active site" description="S-palmitoyl cysteine intermediate" evidence="4">
    <location>
        <position position="289"/>
    </location>
</feature>
<feature type="sequence variant" id="VAR_047389" description="In dbSNP:rs17853401." evidence="6">
    <original>H</original>
    <variation>N</variation>
    <location>
        <position position="132"/>
    </location>
</feature>
<feature type="sequence variant" id="VAR_047390" description="In dbSNP:rs17853402." evidence="6">
    <original>T</original>
    <variation>A</variation>
    <location>
        <position position="221"/>
    </location>
</feature>
<feature type="sequence variant" id="VAR_047391" description="In dbSNP:rs11921691." evidence="8">
    <original>K</original>
    <variation>R</variation>
    <location>
        <position position="247"/>
    </location>
</feature>
<feature type="sequence variant" id="VAR_047392" description="In dbSNP:rs17857054." evidence="6">
    <original>H</original>
    <variation>R</variation>
    <location>
        <position position="274"/>
    </location>
</feature>
<accession>Q8IYP9</accession>
<accession>D3DN76</accession>
<organism>
    <name type="scientific">Homo sapiens</name>
    <name type="common">Human</name>
    <dbReference type="NCBI Taxonomy" id="9606"/>
    <lineage>
        <taxon>Eukaryota</taxon>
        <taxon>Metazoa</taxon>
        <taxon>Chordata</taxon>
        <taxon>Craniata</taxon>
        <taxon>Vertebrata</taxon>
        <taxon>Euteleostomi</taxon>
        <taxon>Mammalia</taxon>
        <taxon>Eutheria</taxon>
        <taxon>Euarchontoglires</taxon>
        <taxon>Primates</taxon>
        <taxon>Haplorrhini</taxon>
        <taxon>Catarrhini</taxon>
        <taxon>Hominidae</taxon>
        <taxon>Homo</taxon>
    </lineage>
</organism>
<reference key="1">
    <citation type="journal article" date="2006" name="Nature">
        <title>The DNA sequence, annotation and analysis of human chromosome 3.</title>
        <authorList>
            <person name="Muzny D.M."/>
            <person name="Scherer S.E."/>
            <person name="Kaul R."/>
            <person name="Wang J."/>
            <person name="Yu J."/>
            <person name="Sudbrak R."/>
            <person name="Buhay C.J."/>
            <person name="Chen R."/>
            <person name="Cree A."/>
            <person name="Ding Y."/>
            <person name="Dugan-Rocha S."/>
            <person name="Gill R."/>
            <person name="Gunaratne P."/>
            <person name="Harris R.A."/>
            <person name="Hawes A.C."/>
            <person name="Hernandez J."/>
            <person name="Hodgson A.V."/>
            <person name="Hume J."/>
            <person name="Jackson A."/>
            <person name="Khan Z.M."/>
            <person name="Kovar-Smith C."/>
            <person name="Lewis L.R."/>
            <person name="Lozado R.J."/>
            <person name="Metzker M.L."/>
            <person name="Milosavljevic A."/>
            <person name="Miner G.R."/>
            <person name="Morgan M.B."/>
            <person name="Nazareth L.V."/>
            <person name="Scott G."/>
            <person name="Sodergren E."/>
            <person name="Song X.-Z."/>
            <person name="Steffen D."/>
            <person name="Wei S."/>
            <person name="Wheeler D.A."/>
            <person name="Wright M.W."/>
            <person name="Worley K.C."/>
            <person name="Yuan Y."/>
            <person name="Zhang Z."/>
            <person name="Adams C.Q."/>
            <person name="Ansari-Lari M.A."/>
            <person name="Ayele M."/>
            <person name="Brown M.J."/>
            <person name="Chen G."/>
            <person name="Chen Z."/>
            <person name="Clendenning J."/>
            <person name="Clerc-Blankenburg K.P."/>
            <person name="Chen R."/>
            <person name="Chen Z."/>
            <person name="Davis C."/>
            <person name="Delgado O."/>
            <person name="Dinh H.H."/>
            <person name="Dong W."/>
            <person name="Draper H."/>
            <person name="Ernst S."/>
            <person name="Fu G."/>
            <person name="Gonzalez-Garay M.L."/>
            <person name="Garcia D.K."/>
            <person name="Gillett W."/>
            <person name="Gu J."/>
            <person name="Hao B."/>
            <person name="Haugen E."/>
            <person name="Havlak P."/>
            <person name="He X."/>
            <person name="Hennig S."/>
            <person name="Hu S."/>
            <person name="Huang W."/>
            <person name="Jackson L.R."/>
            <person name="Jacob L.S."/>
            <person name="Kelly S.H."/>
            <person name="Kube M."/>
            <person name="Levy R."/>
            <person name="Li Z."/>
            <person name="Liu B."/>
            <person name="Liu J."/>
            <person name="Liu W."/>
            <person name="Lu J."/>
            <person name="Maheshwari M."/>
            <person name="Nguyen B.-V."/>
            <person name="Okwuonu G.O."/>
            <person name="Palmeiri A."/>
            <person name="Pasternak S."/>
            <person name="Perez L.M."/>
            <person name="Phelps K.A."/>
            <person name="Plopper F.J."/>
            <person name="Qiang B."/>
            <person name="Raymond C."/>
            <person name="Rodriguez R."/>
            <person name="Saenphimmachak C."/>
            <person name="Santibanez J."/>
            <person name="Shen H."/>
            <person name="Shen Y."/>
            <person name="Subramanian S."/>
            <person name="Tabor P.E."/>
            <person name="Verduzco D."/>
            <person name="Waldron L."/>
            <person name="Wang J."/>
            <person name="Wang J."/>
            <person name="Wang Q."/>
            <person name="Williams G.A."/>
            <person name="Wong G.K.-S."/>
            <person name="Yao Z."/>
            <person name="Zhang J."/>
            <person name="Zhang X."/>
            <person name="Zhao G."/>
            <person name="Zhou J."/>
            <person name="Zhou Y."/>
            <person name="Nelson D."/>
            <person name="Lehrach H."/>
            <person name="Reinhardt R."/>
            <person name="Naylor S.L."/>
            <person name="Yang H."/>
            <person name="Olson M."/>
            <person name="Weinstock G."/>
            <person name="Gibbs R.A."/>
        </authorList>
    </citation>
    <scope>NUCLEOTIDE SEQUENCE [LARGE SCALE GENOMIC DNA]</scope>
</reference>
<reference key="2">
    <citation type="submission" date="2005-09" db="EMBL/GenBank/DDBJ databases">
        <authorList>
            <person name="Mural R.J."/>
            <person name="Istrail S."/>
            <person name="Sutton G.G."/>
            <person name="Florea L."/>
            <person name="Halpern A.L."/>
            <person name="Mobarry C.M."/>
            <person name="Lippert R."/>
            <person name="Walenz B."/>
            <person name="Shatkay H."/>
            <person name="Dew I."/>
            <person name="Miller J.R."/>
            <person name="Flanigan M.J."/>
            <person name="Edwards N.J."/>
            <person name="Bolanos R."/>
            <person name="Fasulo D."/>
            <person name="Halldorsson B.V."/>
            <person name="Hannenhalli S."/>
            <person name="Turner R."/>
            <person name="Yooseph S."/>
            <person name="Lu F."/>
            <person name="Nusskern D.R."/>
            <person name="Shue B.C."/>
            <person name="Zheng X.H."/>
            <person name="Zhong F."/>
            <person name="Delcher A.L."/>
            <person name="Huson D.H."/>
            <person name="Kravitz S.A."/>
            <person name="Mouchard L."/>
            <person name="Reinert K."/>
            <person name="Remington K.A."/>
            <person name="Clark A.G."/>
            <person name="Waterman M.S."/>
            <person name="Eichler E.E."/>
            <person name="Adams M.D."/>
            <person name="Hunkapiller M.W."/>
            <person name="Myers E.W."/>
            <person name="Venter J.C."/>
        </authorList>
    </citation>
    <scope>NUCLEOTIDE SEQUENCE [LARGE SCALE GENOMIC DNA]</scope>
    <scope>VARIANT ARG-247</scope>
</reference>
<reference key="3">
    <citation type="journal article" date="2004" name="Genome Res.">
        <title>The status, quality, and expansion of the NIH full-length cDNA project: the Mammalian Gene Collection (MGC).</title>
        <authorList>
            <consortium name="The MGC Project Team"/>
        </authorList>
    </citation>
    <scope>NUCLEOTIDE SEQUENCE [LARGE SCALE MRNA]</scope>
    <scope>VARIANTS ASN-132; ALA-221 AND ARG-274</scope>
    <source>
        <tissue>Testis</tissue>
    </source>
</reference>
<reference key="4">
    <citation type="journal article" date="2012" name="J. Biol. Chem.">
        <title>Distinct acyl protein transferases and thioesterases control surface expression of calcium-activated potassium channels.</title>
        <authorList>
            <person name="Tian L."/>
            <person name="McClafferty H."/>
            <person name="Knaus H.G."/>
            <person name="Ruth P."/>
            <person name="Shipston M.J."/>
        </authorList>
    </citation>
    <scope>FUNCTION</scope>
    <scope>CATALYTIC ACTIVITY</scope>
    <scope>SUBCELLULAR LOCATION</scope>
</reference>
<comment type="function">
    <text evidence="7 10">Palmitoyltransferase that could catalyze the addition of palmitate onto various protein substrates and be involved in a variety of cellular processes (Probable). Palmitoyltransferase that mediates palmitoylation of KCNMA1, regulating localization of KCNMA1 to the plasma membrane. May be involved in NOS1 regulation and targeting to the synaptic membrane.</text>
</comment>
<comment type="catalytic activity">
    <reaction evidence="7">
        <text>L-cysteinyl-[protein] + hexadecanoyl-CoA = S-hexadecanoyl-L-cysteinyl-[protein] + CoA</text>
        <dbReference type="Rhea" id="RHEA:36683"/>
        <dbReference type="Rhea" id="RHEA-COMP:10131"/>
        <dbReference type="Rhea" id="RHEA-COMP:11032"/>
        <dbReference type="ChEBI" id="CHEBI:29950"/>
        <dbReference type="ChEBI" id="CHEBI:57287"/>
        <dbReference type="ChEBI" id="CHEBI:57379"/>
        <dbReference type="ChEBI" id="CHEBI:74151"/>
        <dbReference type="EC" id="2.3.1.225"/>
    </reaction>
    <physiologicalReaction direction="left-to-right" evidence="10">
        <dbReference type="Rhea" id="RHEA:36684"/>
    </physiologicalReaction>
</comment>
<comment type="subunit">
    <text evidence="1">Interacts with NOS1.</text>
</comment>
<comment type="interaction">
    <interactant intactId="EBI-12111024">
        <id>Q8IYP9</id>
    </interactant>
    <interactant intactId="EBI-12111022">
        <id>Q8NBF1</id>
        <label>GLIS1</label>
    </interactant>
    <organismsDiffer>false</organismsDiffer>
    <experiments>3</experiments>
</comment>
<comment type="subcellular location">
    <subcellularLocation>
        <location evidence="10">Golgi apparatus membrane</location>
        <topology evidence="3">Multi-pass membrane protein</topology>
    </subcellularLocation>
    <subcellularLocation>
        <location evidence="10">Golgi apparatus</location>
        <location evidence="10">trans-Golgi network membrane</location>
        <topology evidence="3">Multi-pass membrane protein</topology>
    </subcellularLocation>
</comment>
<comment type="domain">
    <text evidence="2">The DHHC domain is required for palmitoyltransferase activity.</text>
</comment>
<comment type="similarity">
    <text evidence="9">Belongs to the DHHC palmitoyltransferase family.</text>
</comment>
<protein>
    <recommendedName>
        <fullName evidence="9">Palmitoyltransferase ZDHHC23</fullName>
        <ecNumber evidence="7">2.3.1.225</ecNumber>
    </recommendedName>
    <alternativeName>
        <fullName evidence="11">Zinc finger DHHC domain-containing protein 23</fullName>
        <shortName>DHHC-23</shortName>
        <shortName>zDHHC23</shortName>
    </alternativeName>
</protein>
<gene>
    <name evidence="11" type="primary">ZDHHC23</name>
</gene>
<proteinExistence type="evidence at protein level"/>
<name>ZDH23_HUMAN</name>
<evidence type="ECO:0000250" key="1">
    <source>
        <dbReference type="UniProtKB" id="Q76IC6"/>
    </source>
</evidence>
<evidence type="ECO:0000250" key="2">
    <source>
        <dbReference type="UniProtKB" id="Q8IUH5"/>
    </source>
</evidence>
<evidence type="ECO:0000255" key="3"/>
<evidence type="ECO:0000255" key="4">
    <source>
        <dbReference type="PROSITE-ProRule" id="PRU00067"/>
    </source>
</evidence>
<evidence type="ECO:0000256" key="5">
    <source>
        <dbReference type="SAM" id="MobiDB-lite"/>
    </source>
</evidence>
<evidence type="ECO:0000269" key="6">
    <source>
    </source>
</evidence>
<evidence type="ECO:0000269" key="7">
    <source>
    </source>
</evidence>
<evidence type="ECO:0000269" key="8">
    <source ref="2"/>
</evidence>
<evidence type="ECO:0000305" key="9"/>
<evidence type="ECO:0000305" key="10">
    <source>
    </source>
</evidence>
<evidence type="ECO:0000312" key="11">
    <source>
        <dbReference type="HGNC" id="HGNC:28654"/>
    </source>
</evidence>
<keyword id="KW-0012">Acyltransferase</keyword>
<keyword id="KW-0333">Golgi apparatus</keyword>
<keyword id="KW-0449">Lipoprotein</keyword>
<keyword id="KW-0472">Membrane</keyword>
<keyword id="KW-0564">Palmitate</keyword>
<keyword id="KW-1267">Proteomics identification</keyword>
<keyword id="KW-1185">Reference proteome</keyword>
<keyword id="KW-0808">Transferase</keyword>
<keyword id="KW-0812">Transmembrane</keyword>
<keyword id="KW-1133">Transmembrane helix</keyword>